<comment type="function">
    <text evidence="1">This protein is one of the early assembly proteins of the 50S ribosomal subunit, although it is not seen to bind rRNA by itself. It is important during the early stages of 50S assembly.</text>
</comment>
<comment type="subunit">
    <text evidence="1">Part of the 50S ribosomal subunit.</text>
</comment>
<comment type="similarity">
    <text evidence="1">Belongs to the universal ribosomal protein uL13 family.</text>
</comment>
<sequence>MKTFTATPADIEKKWILIDAEGVVLGRLATIVANILRGKNKPTFTPHMDMGDNVIVINADKVQMTGNKRADKRYYWHTGHPGGVKFRTAEQVLEGAHPERVVLKAVERMISRNSLGRQQMTNLRVYAGAEHPHEAQQPTVLDVKSLNPKNTRSA</sequence>
<name>RL13_CERS1</name>
<organism>
    <name type="scientific">Cereibacter sphaeroides (strain ATCC 17029 / ATH 2.4.9)</name>
    <name type="common">Rhodobacter sphaeroides</name>
    <dbReference type="NCBI Taxonomy" id="349101"/>
    <lineage>
        <taxon>Bacteria</taxon>
        <taxon>Pseudomonadati</taxon>
        <taxon>Pseudomonadota</taxon>
        <taxon>Alphaproteobacteria</taxon>
        <taxon>Rhodobacterales</taxon>
        <taxon>Paracoccaceae</taxon>
        <taxon>Cereibacter</taxon>
    </lineage>
</organism>
<proteinExistence type="inferred from homology"/>
<reference key="1">
    <citation type="submission" date="2007-02" db="EMBL/GenBank/DDBJ databases">
        <title>Complete sequence of chromosome 1 of Rhodobacter sphaeroides ATCC 17029.</title>
        <authorList>
            <person name="Copeland A."/>
            <person name="Lucas S."/>
            <person name="Lapidus A."/>
            <person name="Barry K."/>
            <person name="Detter J.C."/>
            <person name="Glavina del Rio T."/>
            <person name="Hammon N."/>
            <person name="Israni S."/>
            <person name="Dalin E."/>
            <person name="Tice H."/>
            <person name="Pitluck S."/>
            <person name="Kiss H."/>
            <person name="Brettin T."/>
            <person name="Bruce D."/>
            <person name="Han C."/>
            <person name="Tapia R."/>
            <person name="Gilna P."/>
            <person name="Schmutz J."/>
            <person name="Larimer F."/>
            <person name="Land M."/>
            <person name="Hauser L."/>
            <person name="Kyrpides N."/>
            <person name="Mikhailova N."/>
            <person name="Richardson P."/>
            <person name="Mackenzie C."/>
            <person name="Choudhary M."/>
            <person name="Donohue T.J."/>
            <person name="Kaplan S."/>
        </authorList>
    </citation>
    <scope>NUCLEOTIDE SEQUENCE [LARGE SCALE GENOMIC DNA]</scope>
    <source>
        <strain>ATCC 17029 / ATH 2.4.9</strain>
    </source>
</reference>
<accession>A3PK95</accession>
<gene>
    <name evidence="1" type="primary">rplM</name>
    <name type="ordered locus">Rsph17029_1651</name>
</gene>
<dbReference type="EMBL" id="CP000577">
    <property type="protein sequence ID" value="ABN76761.1"/>
    <property type="molecule type" value="Genomic_DNA"/>
</dbReference>
<dbReference type="RefSeq" id="WP_002720164.1">
    <property type="nucleotide sequence ID" value="NC_009049.1"/>
</dbReference>
<dbReference type="SMR" id="A3PK95"/>
<dbReference type="GeneID" id="67446748"/>
<dbReference type="KEGG" id="rsh:Rsph17029_1651"/>
<dbReference type="HOGENOM" id="CLU_082184_2_0_5"/>
<dbReference type="GO" id="GO:0022625">
    <property type="term" value="C:cytosolic large ribosomal subunit"/>
    <property type="evidence" value="ECO:0007669"/>
    <property type="project" value="TreeGrafter"/>
</dbReference>
<dbReference type="GO" id="GO:0003729">
    <property type="term" value="F:mRNA binding"/>
    <property type="evidence" value="ECO:0007669"/>
    <property type="project" value="TreeGrafter"/>
</dbReference>
<dbReference type="GO" id="GO:0003735">
    <property type="term" value="F:structural constituent of ribosome"/>
    <property type="evidence" value="ECO:0007669"/>
    <property type="project" value="InterPro"/>
</dbReference>
<dbReference type="GO" id="GO:0017148">
    <property type="term" value="P:negative regulation of translation"/>
    <property type="evidence" value="ECO:0007669"/>
    <property type="project" value="TreeGrafter"/>
</dbReference>
<dbReference type="GO" id="GO:0006412">
    <property type="term" value="P:translation"/>
    <property type="evidence" value="ECO:0007669"/>
    <property type="project" value="UniProtKB-UniRule"/>
</dbReference>
<dbReference type="CDD" id="cd00392">
    <property type="entry name" value="Ribosomal_L13"/>
    <property type="match status" value="1"/>
</dbReference>
<dbReference type="FunFam" id="3.90.1180.10:FF:000001">
    <property type="entry name" value="50S ribosomal protein L13"/>
    <property type="match status" value="1"/>
</dbReference>
<dbReference type="Gene3D" id="3.90.1180.10">
    <property type="entry name" value="Ribosomal protein L13"/>
    <property type="match status" value="1"/>
</dbReference>
<dbReference type="HAMAP" id="MF_01366">
    <property type="entry name" value="Ribosomal_uL13"/>
    <property type="match status" value="1"/>
</dbReference>
<dbReference type="InterPro" id="IPR005822">
    <property type="entry name" value="Ribosomal_uL13"/>
</dbReference>
<dbReference type="InterPro" id="IPR005823">
    <property type="entry name" value="Ribosomal_uL13_bac-type"/>
</dbReference>
<dbReference type="InterPro" id="IPR036899">
    <property type="entry name" value="Ribosomal_uL13_sf"/>
</dbReference>
<dbReference type="NCBIfam" id="TIGR01066">
    <property type="entry name" value="rplM_bact"/>
    <property type="match status" value="1"/>
</dbReference>
<dbReference type="PANTHER" id="PTHR11545:SF2">
    <property type="entry name" value="LARGE RIBOSOMAL SUBUNIT PROTEIN UL13M"/>
    <property type="match status" value="1"/>
</dbReference>
<dbReference type="PANTHER" id="PTHR11545">
    <property type="entry name" value="RIBOSOMAL PROTEIN L13"/>
    <property type="match status" value="1"/>
</dbReference>
<dbReference type="Pfam" id="PF00572">
    <property type="entry name" value="Ribosomal_L13"/>
    <property type="match status" value="1"/>
</dbReference>
<dbReference type="PIRSF" id="PIRSF002181">
    <property type="entry name" value="Ribosomal_L13"/>
    <property type="match status" value="1"/>
</dbReference>
<dbReference type="SUPFAM" id="SSF52161">
    <property type="entry name" value="Ribosomal protein L13"/>
    <property type="match status" value="1"/>
</dbReference>
<feature type="chain" id="PRO_1000055455" description="Large ribosomal subunit protein uL13">
    <location>
        <begin position="1"/>
        <end position="154"/>
    </location>
</feature>
<keyword id="KW-0687">Ribonucleoprotein</keyword>
<keyword id="KW-0689">Ribosomal protein</keyword>
<evidence type="ECO:0000255" key="1">
    <source>
        <dbReference type="HAMAP-Rule" id="MF_01366"/>
    </source>
</evidence>
<evidence type="ECO:0000305" key="2"/>
<protein>
    <recommendedName>
        <fullName evidence="1">Large ribosomal subunit protein uL13</fullName>
    </recommendedName>
    <alternativeName>
        <fullName evidence="2">50S ribosomal protein L13</fullName>
    </alternativeName>
</protein>